<gene>
    <name evidence="7" type="primary">Mgat4d</name>
</gene>
<reference key="1">
    <citation type="journal article" date="2004" name="Genome Res.">
        <title>The status, quality, and expansion of the NIH full-length cDNA project: the Mammalian Gene Collection (MGC).</title>
        <authorList>
            <consortium name="The MGC Project Team"/>
        </authorList>
    </citation>
    <scope>NUCLEOTIDE SEQUENCE [LARGE SCALE MRNA]</scope>
    <source>
        <tissue>Testis</tissue>
    </source>
</reference>
<reference key="2">
    <citation type="journal article" date="2015" name="Mol. Biol. Cell">
        <title>Expression, sorting, and segregation of Golgi proteins during germ cell differentiation in the testis.</title>
        <authorList>
            <person name="Au C.E."/>
            <person name="Hermo L."/>
            <person name="Byrne E."/>
            <person name="Smirle J."/>
            <person name="Fazel A."/>
            <person name="Simon P.H."/>
            <person name="Kearney R.E."/>
            <person name="Cameron P.H."/>
            <person name="Smith C.E."/>
            <person name="Vali H."/>
            <person name="Fernandez-Rodriguez J."/>
            <person name="Ma K."/>
            <person name="Nilsson T."/>
            <person name="Bergeron J.J."/>
        </authorList>
    </citation>
    <scope>SUBCELLULAR LOCATION</scope>
    <scope>TISSUE SPECIFICITY</scope>
    <scope>GLYCOSYLATION</scope>
</reference>
<protein>
    <recommendedName>
        <fullName evidence="5">Alpha-1,3-mannosyl-glycoprotein 4-beta-N-acetylglucosaminyltransferase-like protein MGAT4D</fullName>
    </recommendedName>
    <alternativeName>
        <fullName evidence="4">Glycosyltransferase 54 domain-containing protein</fullName>
        <shortName evidence="4">GL54D</shortName>
    </alternativeName>
</protein>
<accession>Q4V8F8</accession>
<proteinExistence type="evidence at protein level"/>
<sequence>MKTKNVNLLFALVAVLLFGFSCFCISRMNQTNNQLINCRNHVLEFKETMLRLKNKSENNHQNLVKVLHQLKHKVAPAKPSGSILEKKVNMLDQDETVFNQFEVLKFFLPHLRTAGNIYPDIAIGRQRAGVSFALGITTIDRGNHTYLKQTLTSVLSRMTPEEEEDSVVIVSVADTDENYLKSVVHMVKTRFRKQVQSGALEVISIPALFYPQTLLEKKTTKNAKNWQIKQVLDFCILMLYAQPKATYYLQLEDDIVAKKMYFTKMKDFVNSVTSKDWFYIEFSVLGFIGKLFRSKDLMDFVHFFLIFYRAKPIDVLLDDIALLRMCSFGGPLRSCLQLKREVRVQYKPSLFQHVGTHSSFPGREQHLKDHYY</sequence>
<organism>
    <name type="scientific">Rattus norvegicus</name>
    <name type="common">Rat</name>
    <dbReference type="NCBI Taxonomy" id="10116"/>
    <lineage>
        <taxon>Eukaryota</taxon>
        <taxon>Metazoa</taxon>
        <taxon>Chordata</taxon>
        <taxon>Craniata</taxon>
        <taxon>Vertebrata</taxon>
        <taxon>Euteleostomi</taxon>
        <taxon>Mammalia</taxon>
        <taxon>Eutheria</taxon>
        <taxon>Euarchontoglires</taxon>
        <taxon>Glires</taxon>
        <taxon>Rodentia</taxon>
        <taxon>Myomorpha</taxon>
        <taxon>Muroidea</taxon>
        <taxon>Muridae</taxon>
        <taxon>Murinae</taxon>
        <taxon>Rattus</taxon>
    </lineage>
</organism>
<evidence type="ECO:0000250" key="1">
    <source>
        <dbReference type="UniProtKB" id="Q9D4R2"/>
    </source>
</evidence>
<evidence type="ECO:0000255" key="2"/>
<evidence type="ECO:0000269" key="3">
    <source>
    </source>
</evidence>
<evidence type="ECO:0000303" key="4">
    <source>
    </source>
</evidence>
<evidence type="ECO:0000305" key="5"/>
<evidence type="ECO:0000305" key="6">
    <source>
    </source>
</evidence>
<evidence type="ECO:0000312" key="7">
    <source>
        <dbReference type="RGD" id="1310572"/>
    </source>
</evidence>
<keyword id="KW-0221">Differentiation</keyword>
<keyword id="KW-0256">Endoplasmic reticulum</keyword>
<keyword id="KW-0325">Glycoprotein</keyword>
<keyword id="KW-0333">Golgi apparatus</keyword>
<keyword id="KW-0472">Membrane</keyword>
<keyword id="KW-1185">Reference proteome</keyword>
<keyword id="KW-0735">Signal-anchor</keyword>
<keyword id="KW-0744">Spermatogenesis</keyword>
<keyword id="KW-0812">Transmembrane</keyword>
<keyword id="KW-1133">Transmembrane helix</keyword>
<comment type="function">
    <text evidence="1">May play a role in male spermatogenesis. In vitro acts as inhibitor of MGAT1 activity causing cell surface proteins to carry mainly high mannose N-glycans. The function is mediated by its lumenal domain and occurs specifically in the Golgi. A catalytic glucosyltransferase activity is not detected. May be involved in regulation of Sertoli-germ cell interactions during specific stages of spermatogenesis.</text>
</comment>
<comment type="subunit">
    <text evidence="1 5">May self-associate; specifically in the endoplasmic reticulum prior to its translocation to the Golgi. Interacts with MGAT1, MGAT3 and MAN2A2; may interact with MGTA1 specifically in the Golgi.</text>
</comment>
<comment type="subcellular location">
    <subcellularLocation>
        <location evidence="3">Golgi apparatus membrane</location>
        <topology evidence="6">Single-pass type II membrane protein</topology>
    </subcellularLocation>
    <subcellularLocation>
        <location evidence="5">Endoplasmic reticulum membrane</location>
        <topology evidence="5">Single-pass type II membrane protein</topology>
    </subcellularLocation>
</comment>
<comment type="tissue specificity">
    <text evidence="3">Testis.</text>
</comment>
<comment type="developmental stage">
    <text evidence="3">Detected in the Golgi apparatus of pachytene spermatocytes beginning at stage VII and extending up to stage XIV. Detected in the Golgi apparatus of spermatids at steps 1-15 of spermatogenesis.</text>
</comment>
<comment type="PTM">
    <text evidence="3">N-glycosylated. O-glycosylated; further modified with terminal sialic acid residues.</text>
</comment>
<comment type="similarity">
    <text evidence="5">Belongs to the glycosyltransferase 54 family.</text>
</comment>
<feature type="chain" id="PRO_0000311678" description="Alpha-1,3-mannosyl-glycoprotein 4-beta-N-acetylglucosaminyltransferase-like protein MGAT4D">
    <location>
        <begin position="1"/>
        <end position="372"/>
    </location>
</feature>
<feature type="topological domain" description="Cytoplasmic" evidence="2">
    <location>
        <begin position="1"/>
        <end position="8"/>
    </location>
</feature>
<feature type="transmembrane region" description="Helical; Signal-anchor for type II membrane protein" evidence="2">
    <location>
        <begin position="9"/>
        <end position="29"/>
    </location>
</feature>
<feature type="topological domain" description="Lumenal" evidence="2">
    <location>
        <begin position="30"/>
        <end position="372"/>
    </location>
</feature>
<feature type="glycosylation site" description="N-linked (GlcNAc...) asparagine" evidence="2">
    <location>
        <position position="54"/>
    </location>
</feature>
<feature type="glycosylation site" description="N-linked (GlcNAc...) asparagine" evidence="2">
    <location>
        <position position="143"/>
    </location>
</feature>
<name>MGT4D_RAT</name>
<dbReference type="EMBL" id="BC097408">
    <property type="protein sequence ID" value="AAH97408.1"/>
    <property type="molecule type" value="mRNA"/>
</dbReference>
<dbReference type="RefSeq" id="NP_001020837.1">
    <property type="nucleotide sequence ID" value="NM_001025666.1"/>
</dbReference>
<dbReference type="SMR" id="Q4V8F8"/>
<dbReference type="FunCoup" id="Q4V8F8">
    <property type="interactions" value="52"/>
</dbReference>
<dbReference type="STRING" id="10116.ENSRNOP00000004982"/>
<dbReference type="CAZy" id="GT54">
    <property type="family name" value="Glycosyltransferase Family 54"/>
</dbReference>
<dbReference type="GlyCosmos" id="Q4V8F8">
    <property type="glycosylation" value="2 sites, No reported glycans"/>
</dbReference>
<dbReference type="GlyGen" id="Q4V8F8">
    <property type="glycosylation" value="2 sites"/>
</dbReference>
<dbReference type="iPTMnet" id="Q4V8F8"/>
<dbReference type="PhosphoSitePlus" id="Q4V8F8"/>
<dbReference type="PaxDb" id="10116-ENSRNOP00000004982"/>
<dbReference type="GeneID" id="304646"/>
<dbReference type="KEGG" id="rno:304646"/>
<dbReference type="AGR" id="RGD:1310572"/>
<dbReference type="CTD" id="152586"/>
<dbReference type="RGD" id="1310572">
    <property type="gene designation" value="Mgat4d"/>
</dbReference>
<dbReference type="eggNOG" id="ENOG502QPQJ">
    <property type="taxonomic scope" value="Eukaryota"/>
</dbReference>
<dbReference type="HOGENOM" id="CLU_027046_2_0_1"/>
<dbReference type="InParanoid" id="Q4V8F8"/>
<dbReference type="OrthoDB" id="2016523at2759"/>
<dbReference type="PhylomeDB" id="Q4V8F8"/>
<dbReference type="TreeFam" id="TF324570"/>
<dbReference type="PRO" id="PR:Q4V8F8"/>
<dbReference type="Proteomes" id="UP000002494">
    <property type="component" value="Chromosome 19"/>
</dbReference>
<dbReference type="Bgee" id="ENSRNOG00000003695">
    <property type="expression patterns" value="Expressed in testis"/>
</dbReference>
<dbReference type="GO" id="GO:0005783">
    <property type="term" value="C:endoplasmic reticulum"/>
    <property type="evidence" value="ECO:0000266"/>
    <property type="project" value="RGD"/>
</dbReference>
<dbReference type="GO" id="GO:0005789">
    <property type="term" value="C:endoplasmic reticulum membrane"/>
    <property type="evidence" value="ECO:0007669"/>
    <property type="project" value="UniProtKB-SubCell"/>
</dbReference>
<dbReference type="GO" id="GO:0005793">
    <property type="term" value="C:endoplasmic reticulum-Golgi intermediate compartment"/>
    <property type="evidence" value="ECO:0000266"/>
    <property type="project" value="RGD"/>
</dbReference>
<dbReference type="GO" id="GO:0000139">
    <property type="term" value="C:Golgi membrane"/>
    <property type="evidence" value="ECO:0007669"/>
    <property type="project" value="UniProtKB-SubCell"/>
</dbReference>
<dbReference type="GO" id="GO:0005795">
    <property type="term" value="C:Golgi stack"/>
    <property type="evidence" value="ECO:0000266"/>
    <property type="project" value="RGD"/>
</dbReference>
<dbReference type="GO" id="GO:0016020">
    <property type="term" value="C:membrane"/>
    <property type="evidence" value="ECO:0000266"/>
    <property type="project" value="RGD"/>
</dbReference>
<dbReference type="GO" id="GO:0008375">
    <property type="term" value="F:acetylglucosaminyltransferase activity"/>
    <property type="evidence" value="ECO:0000318"/>
    <property type="project" value="GO_Central"/>
</dbReference>
<dbReference type="GO" id="GO:0030154">
    <property type="term" value="P:cell differentiation"/>
    <property type="evidence" value="ECO:0007669"/>
    <property type="project" value="UniProtKB-KW"/>
</dbReference>
<dbReference type="GO" id="GO:0060051">
    <property type="term" value="P:negative regulation of protein glycosylation"/>
    <property type="evidence" value="ECO:0000266"/>
    <property type="project" value="RGD"/>
</dbReference>
<dbReference type="GO" id="GO:0006487">
    <property type="term" value="P:protein N-linked glycosylation"/>
    <property type="evidence" value="ECO:0000318"/>
    <property type="project" value="GO_Central"/>
</dbReference>
<dbReference type="GO" id="GO:0007283">
    <property type="term" value="P:spermatogenesis"/>
    <property type="evidence" value="ECO:0007669"/>
    <property type="project" value="UniProtKB-KW"/>
</dbReference>
<dbReference type="InterPro" id="IPR006759">
    <property type="entry name" value="Glyco_transf_54"/>
</dbReference>
<dbReference type="PANTHER" id="PTHR12062:SF10">
    <property type="entry name" value="ALPHA-1,3-MANNOSYL-GLYCOPROTEIN 4-BETA-N-ACETYLGLUCOSAMINYLTRANSFERASE-LIKE PROTEIN MGAT4D"/>
    <property type="match status" value="1"/>
</dbReference>
<dbReference type="PANTHER" id="PTHR12062">
    <property type="entry name" value="N-ACETYLGLUCOSAMINYLTRANSFERASE VI"/>
    <property type="match status" value="1"/>
</dbReference>
<dbReference type="Pfam" id="PF04666">
    <property type="entry name" value="MGAT4_cons"/>
    <property type="match status" value="1"/>
</dbReference>